<name>DNLI_AQUAE</name>
<feature type="chain" id="PRO_0000059623" description="Probable DNA ligase">
    <location>
        <begin position="1"/>
        <end position="584"/>
    </location>
</feature>
<feature type="active site" description="N6-AMP-lysine intermediate" evidence="1">
    <location>
        <position position="250"/>
    </location>
</feature>
<feature type="binding site" evidence="1">
    <location>
        <position position="248"/>
    </location>
    <ligand>
        <name>ATP</name>
        <dbReference type="ChEBI" id="CHEBI:30616"/>
    </ligand>
</feature>
<feature type="binding site" evidence="1">
    <location>
        <position position="255"/>
    </location>
    <ligand>
        <name>ATP</name>
        <dbReference type="ChEBI" id="CHEBI:30616"/>
    </ligand>
</feature>
<feature type="binding site" evidence="1">
    <location>
        <position position="270"/>
    </location>
    <ligand>
        <name>ATP</name>
        <dbReference type="ChEBI" id="CHEBI:30616"/>
    </ligand>
</feature>
<feature type="binding site" evidence="1">
    <location>
        <position position="299"/>
    </location>
    <ligand>
        <name>ATP</name>
        <dbReference type="ChEBI" id="CHEBI:30616"/>
    </ligand>
</feature>
<feature type="binding site" evidence="1">
    <location>
        <position position="339"/>
    </location>
    <ligand>
        <name>ATP</name>
        <dbReference type="ChEBI" id="CHEBI:30616"/>
    </ligand>
</feature>
<feature type="binding site" evidence="1">
    <location>
        <position position="416"/>
    </location>
    <ligand>
        <name>ATP</name>
        <dbReference type="ChEBI" id="CHEBI:30616"/>
    </ligand>
</feature>
<feature type="binding site" evidence="1">
    <location>
        <position position="422"/>
    </location>
    <ligand>
        <name>ATP</name>
        <dbReference type="ChEBI" id="CHEBI:30616"/>
    </ligand>
</feature>
<protein>
    <recommendedName>
        <fullName evidence="1">Probable DNA ligase</fullName>
        <ecNumber evidence="1">6.5.1.1</ecNumber>
    </recommendedName>
    <alternativeName>
        <fullName evidence="1">Polydeoxyribonucleotide synthase [ATP]</fullName>
    </alternativeName>
</protein>
<dbReference type="EC" id="6.5.1.1" evidence="1"/>
<dbReference type="EMBL" id="AE000657">
    <property type="protein sequence ID" value="AAC07362.1"/>
    <property type="status" value="ALT_INIT"/>
    <property type="molecule type" value="Genomic_DNA"/>
</dbReference>
<dbReference type="PIR" id="D70421">
    <property type="entry name" value="D70421"/>
</dbReference>
<dbReference type="RefSeq" id="NP_213963.1">
    <property type="nucleotide sequence ID" value="NC_000918.1"/>
</dbReference>
<dbReference type="RefSeq" id="WP_164930711.1">
    <property type="nucleotide sequence ID" value="NC_000918.1"/>
</dbReference>
<dbReference type="SMR" id="O67398"/>
<dbReference type="STRING" id="224324.aq_1394"/>
<dbReference type="EnsemblBacteria" id="AAC07362">
    <property type="protein sequence ID" value="AAC07362"/>
    <property type="gene ID" value="aq_1394"/>
</dbReference>
<dbReference type="KEGG" id="aae:aq_1394"/>
<dbReference type="PATRIC" id="fig|224324.8.peg.1092"/>
<dbReference type="eggNOG" id="COG1793">
    <property type="taxonomic scope" value="Bacteria"/>
</dbReference>
<dbReference type="HOGENOM" id="CLU_005138_6_0_0"/>
<dbReference type="InParanoid" id="O67398"/>
<dbReference type="OrthoDB" id="9802472at2"/>
<dbReference type="Proteomes" id="UP000000798">
    <property type="component" value="Chromosome"/>
</dbReference>
<dbReference type="GO" id="GO:0005524">
    <property type="term" value="F:ATP binding"/>
    <property type="evidence" value="ECO:0007669"/>
    <property type="project" value="UniProtKB-UniRule"/>
</dbReference>
<dbReference type="GO" id="GO:0003677">
    <property type="term" value="F:DNA binding"/>
    <property type="evidence" value="ECO:0007669"/>
    <property type="project" value="InterPro"/>
</dbReference>
<dbReference type="GO" id="GO:0003910">
    <property type="term" value="F:DNA ligase (ATP) activity"/>
    <property type="evidence" value="ECO:0000318"/>
    <property type="project" value="GO_Central"/>
</dbReference>
<dbReference type="GO" id="GO:0046872">
    <property type="term" value="F:metal ion binding"/>
    <property type="evidence" value="ECO:0007669"/>
    <property type="project" value="UniProtKB-KW"/>
</dbReference>
<dbReference type="GO" id="GO:0051301">
    <property type="term" value="P:cell division"/>
    <property type="evidence" value="ECO:0007669"/>
    <property type="project" value="UniProtKB-KW"/>
</dbReference>
<dbReference type="GO" id="GO:0071897">
    <property type="term" value="P:DNA biosynthetic process"/>
    <property type="evidence" value="ECO:0007669"/>
    <property type="project" value="InterPro"/>
</dbReference>
<dbReference type="GO" id="GO:0006310">
    <property type="term" value="P:DNA recombination"/>
    <property type="evidence" value="ECO:0007669"/>
    <property type="project" value="UniProtKB-UniRule"/>
</dbReference>
<dbReference type="GO" id="GO:0006281">
    <property type="term" value="P:DNA repair"/>
    <property type="evidence" value="ECO:0007669"/>
    <property type="project" value="UniProtKB-UniRule"/>
</dbReference>
<dbReference type="GO" id="GO:0006273">
    <property type="term" value="P:lagging strand elongation"/>
    <property type="evidence" value="ECO:0000318"/>
    <property type="project" value="GO_Central"/>
</dbReference>
<dbReference type="CDD" id="cd07901">
    <property type="entry name" value="Adenylation_DNA_ligase_Arch_LigB"/>
    <property type="match status" value="1"/>
</dbReference>
<dbReference type="CDD" id="cd07969">
    <property type="entry name" value="OBF_DNA_ligase_I"/>
    <property type="match status" value="1"/>
</dbReference>
<dbReference type="FunFam" id="1.10.3260.10:FF:000007">
    <property type="entry name" value="DNA ligase"/>
    <property type="match status" value="1"/>
</dbReference>
<dbReference type="FunFam" id="2.40.50.140:FF:000062">
    <property type="entry name" value="DNA ligase"/>
    <property type="match status" value="1"/>
</dbReference>
<dbReference type="FunFam" id="3.30.470.30:FF:000012">
    <property type="entry name" value="Probable DNA ligase"/>
    <property type="match status" value="1"/>
</dbReference>
<dbReference type="Gene3D" id="1.10.3260.10">
    <property type="entry name" value="DNA ligase, ATP-dependent, N-terminal domain"/>
    <property type="match status" value="1"/>
</dbReference>
<dbReference type="Gene3D" id="3.30.470.30">
    <property type="entry name" value="DNA ligase/mRNA capping enzyme"/>
    <property type="match status" value="1"/>
</dbReference>
<dbReference type="Gene3D" id="2.40.50.140">
    <property type="entry name" value="Nucleic acid-binding proteins"/>
    <property type="match status" value="1"/>
</dbReference>
<dbReference type="HAMAP" id="MF_00407">
    <property type="entry name" value="DNA_ligase"/>
    <property type="match status" value="1"/>
</dbReference>
<dbReference type="InterPro" id="IPR050191">
    <property type="entry name" value="ATP-dep_DNA_ligase"/>
</dbReference>
<dbReference type="InterPro" id="IPR022865">
    <property type="entry name" value="DNA_ligae_ATP-dep_bac/arc"/>
</dbReference>
<dbReference type="InterPro" id="IPR000977">
    <property type="entry name" value="DNA_ligase_ATP-dep"/>
</dbReference>
<dbReference type="InterPro" id="IPR012309">
    <property type="entry name" value="DNA_ligase_ATP-dep_C"/>
</dbReference>
<dbReference type="InterPro" id="IPR012310">
    <property type="entry name" value="DNA_ligase_ATP-dep_cent"/>
</dbReference>
<dbReference type="InterPro" id="IPR016059">
    <property type="entry name" value="DNA_ligase_ATP-dep_CS"/>
</dbReference>
<dbReference type="InterPro" id="IPR012308">
    <property type="entry name" value="DNA_ligase_ATP-dep_N"/>
</dbReference>
<dbReference type="InterPro" id="IPR036599">
    <property type="entry name" value="DNA_ligase_N_sf"/>
</dbReference>
<dbReference type="InterPro" id="IPR012340">
    <property type="entry name" value="NA-bd_OB-fold"/>
</dbReference>
<dbReference type="NCBIfam" id="TIGR00574">
    <property type="entry name" value="dnl1"/>
    <property type="match status" value="1"/>
</dbReference>
<dbReference type="PANTHER" id="PTHR45674:SF4">
    <property type="entry name" value="DNA LIGASE 1"/>
    <property type="match status" value="1"/>
</dbReference>
<dbReference type="PANTHER" id="PTHR45674">
    <property type="entry name" value="DNA LIGASE 1/3 FAMILY MEMBER"/>
    <property type="match status" value="1"/>
</dbReference>
<dbReference type="Pfam" id="PF04679">
    <property type="entry name" value="DNA_ligase_A_C"/>
    <property type="match status" value="1"/>
</dbReference>
<dbReference type="Pfam" id="PF01068">
    <property type="entry name" value="DNA_ligase_A_M"/>
    <property type="match status" value="1"/>
</dbReference>
<dbReference type="Pfam" id="PF04675">
    <property type="entry name" value="DNA_ligase_A_N"/>
    <property type="match status" value="1"/>
</dbReference>
<dbReference type="SUPFAM" id="SSF117018">
    <property type="entry name" value="ATP-dependent DNA ligase DNA-binding domain"/>
    <property type="match status" value="1"/>
</dbReference>
<dbReference type="SUPFAM" id="SSF56091">
    <property type="entry name" value="DNA ligase/mRNA capping enzyme, catalytic domain"/>
    <property type="match status" value="1"/>
</dbReference>
<dbReference type="SUPFAM" id="SSF50249">
    <property type="entry name" value="Nucleic acid-binding proteins"/>
    <property type="match status" value="1"/>
</dbReference>
<dbReference type="PROSITE" id="PS00697">
    <property type="entry name" value="DNA_LIGASE_A1"/>
    <property type="match status" value="1"/>
</dbReference>
<dbReference type="PROSITE" id="PS50160">
    <property type="entry name" value="DNA_LIGASE_A3"/>
    <property type="match status" value="1"/>
</dbReference>
<sequence length="584" mass="66945">MEYRILAEFYERIEKTTSRIEMVSSLVELFKQTPKELIDKVVYLSIGKIAPEYTGLDYNFGEKLAIRALSRVLKIPALEIEKRVRQEGDLGEAGRKLYEELGFKPEGTLTVEEVYNGLLNIAKAVGIGSQERKISIFASLLKKATPLEAKYLLRTITERLRLGIGDNTILEALSIAFTGSSVNREVVERAYNLTSDLGYVAKILAEKGLEGVKQVKIQVGRPVRPMLAERMSSPILILRKLGGKCGAEYKYDGERIQAHRKGDEFYLFSRRLENITHQYPDLIEFLKEAIPHDFIVELEAVVIDPASGEIRPFQELMHRKVKYVTKYHITKYPVAGFLFDIIYLDGEDLTLKPYPERREILEKVVKRTDRIGLVPRKIVDNVEDLENFFYQAIEEGCEGLVCKSLAPNSIYQAGKRGFLWIKYKRDYKSVLADTLDLVVVGGFYGKGQRKGTFGSLLMACYDPESDMFKTVTKVGTGFTEDDFKKLEEILMPRKLNHRHPRVNSILEADMWFEPYLVLEITGAELTLSPVHTCGWGKVSPNRGIGLRFPRFTGRYRFDKRPEDATTEQEIIEMYRMQRKIRVRS</sequence>
<keyword id="KW-0067">ATP-binding</keyword>
<keyword id="KW-0131">Cell cycle</keyword>
<keyword id="KW-0132">Cell division</keyword>
<keyword id="KW-0227">DNA damage</keyword>
<keyword id="KW-0233">DNA recombination</keyword>
<keyword id="KW-0234">DNA repair</keyword>
<keyword id="KW-0235">DNA replication</keyword>
<keyword id="KW-0436">Ligase</keyword>
<keyword id="KW-0460">Magnesium</keyword>
<keyword id="KW-0479">Metal-binding</keyword>
<keyword id="KW-0547">Nucleotide-binding</keyword>
<keyword id="KW-1185">Reference proteome</keyword>
<proteinExistence type="inferred from homology"/>
<comment type="function">
    <text evidence="1">DNA ligase that seals nicks in double-stranded DNA during DNA replication, DNA recombination and DNA repair.</text>
</comment>
<comment type="catalytic activity">
    <reaction evidence="1">
        <text>ATP + (deoxyribonucleotide)n-3'-hydroxyl + 5'-phospho-(deoxyribonucleotide)m = (deoxyribonucleotide)n+m + AMP + diphosphate.</text>
        <dbReference type="EC" id="6.5.1.1"/>
    </reaction>
</comment>
<comment type="cofactor">
    <cofactor evidence="1">
        <name>Mg(2+)</name>
        <dbReference type="ChEBI" id="CHEBI:18420"/>
    </cofactor>
</comment>
<comment type="similarity">
    <text evidence="1">Belongs to the ATP-dependent DNA ligase family.</text>
</comment>
<comment type="sequence caution" evidence="2">
    <conflict type="erroneous initiation">
        <sequence resource="EMBL-CDS" id="AAC07362"/>
    </conflict>
</comment>
<evidence type="ECO:0000255" key="1">
    <source>
        <dbReference type="HAMAP-Rule" id="MF_00407"/>
    </source>
</evidence>
<evidence type="ECO:0000305" key="2"/>
<reference key="1">
    <citation type="journal article" date="1998" name="Nature">
        <title>The complete genome of the hyperthermophilic bacterium Aquifex aeolicus.</title>
        <authorList>
            <person name="Deckert G."/>
            <person name="Warren P.V."/>
            <person name="Gaasterland T."/>
            <person name="Young W.G."/>
            <person name="Lenox A.L."/>
            <person name="Graham D.E."/>
            <person name="Overbeek R."/>
            <person name="Snead M.A."/>
            <person name="Keller M."/>
            <person name="Aujay M."/>
            <person name="Huber R."/>
            <person name="Feldman R.A."/>
            <person name="Short J.M."/>
            <person name="Olsen G.J."/>
            <person name="Swanson R.V."/>
        </authorList>
    </citation>
    <scope>NUCLEOTIDE SEQUENCE [LARGE SCALE GENOMIC DNA]</scope>
    <source>
        <strain>VF5</strain>
    </source>
</reference>
<accession>O67398</accession>
<organism>
    <name type="scientific">Aquifex aeolicus (strain VF5)</name>
    <dbReference type="NCBI Taxonomy" id="224324"/>
    <lineage>
        <taxon>Bacteria</taxon>
        <taxon>Pseudomonadati</taxon>
        <taxon>Aquificota</taxon>
        <taxon>Aquificia</taxon>
        <taxon>Aquificales</taxon>
        <taxon>Aquificaceae</taxon>
        <taxon>Aquifex</taxon>
    </lineage>
</organism>
<gene>
    <name evidence="1" type="primary">lig</name>
    <name type="ordered locus">aq_1394</name>
</gene>